<protein>
    <recommendedName>
        <fullName evidence="1">Small ribosomal subunit protein uS8</fullName>
    </recommendedName>
    <alternativeName>
        <fullName evidence="2">30S ribosomal protein S8</fullName>
    </alternativeName>
</protein>
<accession>A6QJ78</accession>
<evidence type="ECO:0000255" key="1">
    <source>
        <dbReference type="HAMAP-Rule" id="MF_01302"/>
    </source>
</evidence>
<evidence type="ECO:0000305" key="2"/>
<feature type="chain" id="PRO_1000073197" description="Small ribosomal subunit protein uS8">
    <location>
        <begin position="1"/>
        <end position="132"/>
    </location>
</feature>
<keyword id="KW-0687">Ribonucleoprotein</keyword>
<keyword id="KW-0689">Ribosomal protein</keyword>
<keyword id="KW-0694">RNA-binding</keyword>
<keyword id="KW-0699">rRNA-binding</keyword>
<proteinExistence type="inferred from homology"/>
<name>RS8_STAAE</name>
<dbReference type="EMBL" id="AP009351">
    <property type="protein sequence ID" value="BAF68410.1"/>
    <property type="molecule type" value="Genomic_DNA"/>
</dbReference>
<dbReference type="RefSeq" id="WP_000178881.1">
    <property type="nucleotide sequence ID" value="NZ_JBBIAE010000006.1"/>
</dbReference>
<dbReference type="SMR" id="A6QJ78"/>
<dbReference type="GeneID" id="98346548"/>
<dbReference type="KEGG" id="sae:NWMN_2138"/>
<dbReference type="HOGENOM" id="CLU_098428_0_2_9"/>
<dbReference type="Proteomes" id="UP000006386">
    <property type="component" value="Chromosome"/>
</dbReference>
<dbReference type="GO" id="GO:1990904">
    <property type="term" value="C:ribonucleoprotein complex"/>
    <property type="evidence" value="ECO:0007669"/>
    <property type="project" value="UniProtKB-KW"/>
</dbReference>
<dbReference type="GO" id="GO:0005840">
    <property type="term" value="C:ribosome"/>
    <property type="evidence" value="ECO:0007669"/>
    <property type="project" value="UniProtKB-KW"/>
</dbReference>
<dbReference type="GO" id="GO:0019843">
    <property type="term" value="F:rRNA binding"/>
    <property type="evidence" value="ECO:0007669"/>
    <property type="project" value="UniProtKB-UniRule"/>
</dbReference>
<dbReference type="GO" id="GO:0003735">
    <property type="term" value="F:structural constituent of ribosome"/>
    <property type="evidence" value="ECO:0007669"/>
    <property type="project" value="InterPro"/>
</dbReference>
<dbReference type="GO" id="GO:0006412">
    <property type="term" value="P:translation"/>
    <property type="evidence" value="ECO:0007669"/>
    <property type="project" value="UniProtKB-UniRule"/>
</dbReference>
<dbReference type="FunFam" id="3.30.1370.30:FF:000002">
    <property type="entry name" value="30S ribosomal protein S8"/>
    <property type="match status" value="1"/>
</dbReference>
<dbReference type="FunFam" id="3.30.1490.10:FF:000001">
    <property type="entry name" value="30S ribosomal protein S8"/>
    <property type="match status" value="1"/>
</dbReference>
<dbReference type="Gene3D" id="3.30.1370.30">
    <property type="match status" value="1"/>
</dbReference>
<dbReference type="Gene3D" id="3.30.1490.10">
    <property type="match status" value="1"/>
</dbReference>
<dbReference type="HAMAP" id="MF_01302_B">
    <property type="entry name" value="Ribosomal_uS8_B"/>
    <property type="match status" value="1"/>
</dbReference>
<dbReference type="InterPro" id="IPR000630">
    <property type="entry name" value="Ribosomal_uS8"/>
</dbReference>
<dbReference type="InterPro" id="IPR047863">
    <property type="entry name" value="Ribosomal_uS8_CS"/>
</dbReference>
<dbReference type="InterPro" id="IPR035987">
    <property type="entry name" value="Ribosomal_uS8_sf"/>
</dbReference>
<dbReference type="NCBIfam" id="NF001109">
    <property type="entry name" value="PRK00136.1"/>
    <property type="match status" value="1"/>
</dbReference>
<dbReference type="PANTHER" id="PTHR11758">
    <property type="entry name" value="40S RIBOSOMAL PROTEIN S15A"/>
    <property type="match status" value="1"/>
</dbReference>
<dbReference type="Pfam" id="PF00410">
    <property type="entry name" value="Ribosomal_S8"/>
    <property type="match status" value="1"/>
</dbReference>
<dbReference type="SUPFAM" id="SSF56047">
    <property type="entry name" value="Ribosomal protein S8"/>
    <property type="match status" value="1"/>
</dbReference>
<dbReference type="PROSITE" id="PS00053">
    <property type="entry name" value="RIBOSOMAL_S8"/>
    <property type="match status" value="1"/>
</dbReference>
<gene>
    <name evidence="1" type="primary">rpsH</name>
    <name type="ordered locus">NWMN_2138</name>
</gene>
<reference key="1">
    <citation type="journal article" date="2008" name="J. Bacteriol.">
        <title>Genome sequence of Staphylococcus aureus strain Newman and comparative analysis of staphylococcal genomes: polymorphism and evolution of two major pathogenicity islands.</title>
        <authorList>
            <person name="Baba T."/>
            <person name="Bae T."/>
            <person name="Schneewind O."/>
            <person name="Takeuchi F."/>
            <person name="Hiramatsu K."/>
        </authorList>
    </citation>
    <scope>NUCLEOTIDE SEQUENCE [LARGE SCALE GENOMIC DNA]</scope>
    <source>
        <strain>Newman</strain>
    </source>
</reference>
<organism>
    <name type="scientific">Staphylococcus aureus (strain Newman)</name>
    <dbReference type="NCBI Taxonomy" id="426430"/>
    <lineage>
        <taxon>Bacteria</taxon>
        <taxon>Bacillati</taxon>
        <taxon>Bacillota</taxon>
        <taxon>Bacilli</taxon>
        <taxon>Bacillales</taxon>
        <taxon>Staphylococcaceae</taxon>
        <taxon>Staphylococcus</taxon>
    </lineage>
</organism>
<comment type="function">
    <text evidence="1">One of the primary rRNA binding proteins, it binds directly to 16S rRNA central domain where it helps coordinate assembly of the platform of the 30S subunit.</text>
</comment>
<comment type="subunit">
    <text evidence="1">Part of the 30S ribosomal subunit. Contacts proteins S5 and S12.</text>
</comment>
<comment type="similarity">
    <text evidence="1">Belongs to the universal ribosomal protein uS8 family.</text>
</comment>
<sequence length="132" mass="14831">MTMTDPIADMLTRVRNANMVRHEKLELPASNIKKEIAEILKSEGFIKNVEYVEDDKQGVLRLFLKYGQNDERVITGLKRISKPGLRVYAKASEMPKVLNGLGIALVSTSEGVITDKEARKRNVGGEIIAYVW</sequence>